<evidence type="ECO:0000256" key="1">
    <source>
        <dbReference type="SAM" id="MobiDB-lite"/>
    </source>
</evidence>
<evidence type="ECO:0000269" key="2">
    <source>
    </source>
</evidence>
<evidence type="ECO:0000269" key="3">
    <source>
    </source>
</evidence>
<evidence type="ECO:0000303" key="4">
    <source>
    </source>
</evidence>
<evidence type="ECO:0000303" key="5">
    <source>
    </source>
</evidence>
<evidence type="ECO:0000305" key="6"/>
<sequence>MAPKKKGGGKKKKKDDGAEPPHDGSWERAVESGTWEKPVTDLPDANTWPTWGALRERVLTACREIKINNTASLRDAFANELVKLSPPELTLIDLRGSSNLHNFNLSPMTTCPKLTDLDLSECAGLDYVLLQSQTVRSVNLRKNPAITKALIHCPRLNKLSITDCPALETLMLWTDELTELDLTGCNNLSVVKLQCPNLLDSKIPPLKVAPQHVKPSHPPIASLLKENLTTAAHKAAADKEALAGVKDTSDSIIPHVFRPF</sequence>
<reference key="1">
    <citation type="journal article" date="2007" name="Science">
        <title>The Chlamydomonas genome reveals the evolution of key animal and plant functions.</title>
        <authorList>
            <person name="Merchant S.S."/>
            <person name="Prochnik S.E."/>
            <person name="Vallon O."/>
            <person name="Harris E.H."/>
            <person name="Karpowicz S.J."/>
            <person name="Witman G.B."/>
            <person name="Terry A."/>
            <person name="Salamov A."/>
            <person name="Fritz-Laylin L.K."/>
            <person name="Marechal-Drouard L."/>
            <person name="Marshall W.F."/>
            <person name="Qu L.H."/>
            <person name="Nelson D.R."/>
            <person name="Sanderfoot A.A."/>
            <person name="Spalding M.H."/>
            <person name="Kapitonov V.V."/>
            <person name="Ren Q."/>
            <person name="Ferris P."/>
            <person name="Lindquist E."/>
            <person name="Shapiro H."/>
            <person name="Lucas S.M."/>
            <person name="Grimwood J."/>
            <person name="Schmutz J."/>
            <person name="Cardol P."/>
            <person name="Cerutti H."/>
            <person name="Chanfreau G."/>
            <person name="Chen C.L."/>
            <person name="Cognat V."/>
            <person name="Croft M.T."/>
            <person name="Dent R."/>
            <person name="Dutcher S."/>
            <person name="Fernandez E."/>
            <person name="Fukuzawa H."/>
            <person name="Gonzalez-Ballester D."/>
            <person name="Gonzalez-Halphen D."/>
            <person name="Hallmann A."/>
            <person name="Hanikenne M."/>
            <person name="Hippler M."/>
            <person name="Inwood W."/>
            <person name="Jabbari K."/>
            <person name="Kalanon M."/>
            <person name="Kuras R."/>
            <person name="Lefebvre P.A."/>
            <person name="Lemaire S.D."/>
            <person name="Lobanov A.V."/>
            <person name="Lohr M."/>
            <person name="Manuell A."/>
            <person name="Meier I."/>
            <person name="Mets L."/>
            <person name="Mittag M."/>
            <person name="Mittelmeier T."/>
            <person name="Moroney J.V."/>
            <person name="Moseley J."/>
            <person name="Napoli C."/>
            <person name="Nedelcu A.M."/>
            <person name="Niyogi K."/>
            <person name="Novoselov S.V."/>
            <person name="Paulsen I.T."/>
            <person name="Pazour G.J."/>
            <person name="Purton S."/>
            <person name="Ral J.P."/>
            <person name="Riano-Pachon D.M."/>
            <person name="Riekhof W."/>
            <person name="Rymarquis L."/>
            <person name="Schroda M."/>
            <person name="Stern D."/>
            <person name="Umen J."/>
            <person name="Willows R."/>
            <person name="Wilson N."/>
            <person name="Zimmer S.L."/>
            <person name="Allmer J."/>
            <person name="Balk J."/>
            <person name="Bisova K."/>
            <person name="Chen C.J."/>
            <person name="Elias M."/>
            <person name="Gendler K."/>
            <person name="Hauser C."/>
            <person name="Lamb M.R."/>
            <person name="Ledford H."/>
            <person name="Long J.C."/>
            <person name="Minagawa J."/>
            <person name="Page M.D."/>
            <person name="Pan J."/>
            <person name="Pootakham W."/>
            <person name="Roje S."/>
            <person name="Rose A."/>
            <person name="Stahlberg E."/>
            <person name="Terauchi A.M."/>
            <person name="Yang P."/>
            <person name="Ball S."/>
            <person name="Bowler C."/>
            <person name="Dieckmann C.L."/>
            <person name="Gladyshev V.N."/>
            <person name="Green P."/>
            <person name="Jorgensen R."/>
            <person name="Mayfield S."/>
            <person name="Mueller-Roeber B."/>
            <person name="Rajamani S."/>
            <person name="Sayre R.T."/>
            <person name="Brokstein P."/>
            <person name="Dubchak I."/>
            <person name="Goodstein D."/>
            <person name="Hornick L."/>
            <person name="Huang Y.W."/>
            <person name="Jhaveri J."/>
            <person name="Luo Y."/>
            <person name="Martinez D."/>
            <person name="Ngau W.C."/>
            <person name="Otillar B."/>
            <person name="Poliakov A."/>
            <person name="Porter A."/>
            <person name="Szajkowski L."/>
            <person name="Werner G."/>
            <person name="Zhou K."/>
            <person name="Grigoriev I.V."/>
            <person name="Rokhsar D.S."/>
            <person name="Grossman A.R."/>
        </authorList>
    </citation>
    <scope>NUCLEOTIDE SEQUENCE [LARGE SCALE GENOMIC DNA]</scope>
    <source>
        <strain>CC-503</strain>
    </source>
</reference>
<reference key="2">
    <citation type="journal article" date="2013" name="Mol. Biol. Cell">
        <title>The N-DRC forms a conserved biochemical complex that maintains outer doublet alignment and limits microtubule sliding in motile axonemes.</title>
        <authorList>
            <person name="Bower R."/>
            <person name="Tritschler D."/>
            <person name="Vanderwaal K."/>
            <person name="Perrone C.A."/>
            <person name="Mueller J."/>
            <person name="Fox L."/>
            <person name="Sale W.S."/>
            <person name="Porter M.E."/>
        </authorList>
    </citation>
    <scope>FUNCTION</scope>
    <scope>SUBUNIT</scope>
    <scope>SUBCELLULAR LOCATION</scope>
</reference>
<reference key="3">
    <citation type="journal article" date="2015" name="Mol. Biol. Cell">
        <title>Detailed structural and biochemical characterization of the nexin-dynein regulatory complex.</title>
        <authorList>
            <person name="Oda T."/>
            <person name="Yanagisawa H."/>
            <person name="Kikkawa M."/>
        </authorList>
    </citation>
    <scope>FUNCTION</scope>
    <scope>SUBUNIT</scope>
    <scope>SUBCELLULAR LOCATION</scope>
</reference>
<gene>
    <name evidence="4 5" type="primary">DRC6</name>
    <name type="synonym">FAP169</name>
    <name evidence="6" type="ORF">CHLRE_12g515200v5</name>
    <name type="ORF">CHLREDRAFT_160224</name>
</gene>
<keyword id="KW-0002">3D-structure</keyword>
<keyword id="KW-0966">Cell projection</keyword>
<keyword id="KW-0969">Cilium</keyword>
<keyword id="KW-0963">Cytoplasm</keyword>
<keyword id="KW-0206">Cytoskeleton</keyword>
<keyword id="KW-0282">Flagellum</keyword>
<keyword id="KW-1185">Reference proteome</keyword>
<proteinExistence type="evidence at protein level"/>
<protein>
    <recommendedName>
        <fullName evidence="4 5">Dynein regulatory complex subunit 6</fullName>
    </recommendedName>
    <alternativeName>
        <fullName>Flagellar associated protein 169</fullName>
    </alternativeName>
</protein>
<feature type="chain" id="PRO_0000444016" description="Dynein regulatory complex subunit 6">
    <location>
        <begin position="1"/>
        <end position="260"/>
    </location>
</feature>
<feature type="region of interest" description="Disordered" evidence="1">
    <location>
        <begin position="1"/>
        <end position="43"/>
    </location>
</feature>
<feature type="compositionally biased region" description="Basic residues" evidence="1">
    <location>
        <begin position="1"/>
        <end position="13"/>
    </location>
</feature>
<feature type="compositionally biased region" description="Basic and acidic residues" evidence="1">
    <location>
        <begin position="14"/>
        <end position="30"/>
    </location>
</feature>
<accession>A8JHD7</accession>
<dbReference type="EMBL" id="DS496190">
    <property type="protein sequence ID" value="EDO96755.1"/>
    <property type="molecule type" value="Genomic_DNA"/>
</dbReference>
<dbReference type="EMBL" id="CM008973">
    <property type="protein sequence ID" value="PNW75157.1"/>
    <property type="molecule type" value="Genomic_DNA"/>
</dbReference>
<dbReference type="RefSeq" id="XP_001703017.1">
    <property type="nucleotide sequence ID" value="XM_001702965.1"/>
</dbReference>
<dbReference type="PDB" id="8GLV">
    <property type="method" value="EM"/>
    <property type="resolution" value="3.10 A"/>
    <property type="chains" value="EM=1-260"/>
</dbReference>
<dbReference type="PDBsum" id="8GLV"/>
<dbReference type="EMDB" id="EMD-40220"/>
<dbReference type="SMR" id="A8JHD7"/>
<dbReference type="STRING" id="3055.A8JHD7"/>
<dbReference type="PaxDb" id="3055-EDO96755"/>
<dbReference type="EnsemblPlants" id="PNW75157">
    <property type="protein sequence ID" value="PNW75157"/>
    <property type="gene ID" value="CHLRE_12g515200v5"/>
</dbReference>
<dbReference type="GeneID" id="5728527"/>
<dbReference type="Gramene" id="PNW75157">
    <property type="protein sequence ID" value="PNW75157"/>
    <property type="gene ID" value="CHLRE_12g515200v5"/>
</dbReference>
<dbReference type="KEGG" id="cre:CHLRE_12g515200v5"/>
<dbReference type="eggNOG" id="ENOG502SAJE">
    <property type="taxonomic scope" value="Eukaryota"/>
</dbReference>
<dbReference type="HOGENOM" id="CLU_1070999_0_0_1"/>
<dbReference type="InParanoid" id="A8JHD7"/>
<dbReference type="OMA" id="LPDANTW"/>
<dbReference type="OrthoDB" id="550575at2759"/>
<dbReference type="Proteomes" id="UP000006906">
    <property type="component" value="Chromosome 12"/>
</dbReference>
<dbReference type="GO" id="GO:0005930">
    <property type="term" value="C:axoneme"/>
    <property type="evidence" value="ECO:0000314"/>
    <property type="project" value="UniProtKB"/>
</dbReference>
<dbReference type="GO" id="GO:0031514">
    <property type="term" value="C:motile cilium"/>
    <property type="evidence" value="ECO:0007669"/>
    <property type="project" value="UniProtKB-KW"/>
</dbReference>
<dbReference type="FunFam" id="3.80.10.10:FF:001424">
    <property type="entry name" value="Dynein regulatory complex subunit 6"/>
    <property type="match status" value="1"/>
</dbReference>
<dbReference type="Gene3D" id="3.80.10.10">
    <property type="entry name" value="Ribonuclease Inhibitor"/>
    <property type="match status" value="1"/>
</dbReference>
<dbReference type="InterPro" id="IPR032675">
    <property type="entry name" value="LRR_dom_sf"/>
</dbReference>
<dbReference type="SUPFAM" id="SSF52047">
    <property type="entry name" value="RNI-like"/>
    <property type="match status" value="1"/>
</dbReference>
<name>DRC6_CHLRE</name>
<organism>
    <name type="scientific">Chlamydomonas reinhardtii</name>
    <name type="common">Chlamydomonas smithii</name>
    <dbReference type="NCBI Taxonomy" id="3055"/>
    <lineage>
        <taxon>Eukaryota</taxon>
        <taxon>Viridiplantae</taxon>
        <taxon>Chlorophyta</taxon>
        <taxon>core chlorophytes</taxon>
        <taxon>Chlorophyceae</taxon>
        <taxon>CS clade</taxon>
        <taxon>Chlamydomonadales</taxon>
        <taxon>Chlamydomonadaceae</taxon>
        <taxon>Chlamydomonas</taxon>
    </lineage>
</organism>
<comment type="function">
    <text evidence="2 3">Component of the nexin-dynein regulatory complex (N-DRC), a key regulator of ciliary/flagellar motility which maintains the alignment and integrity of the distal axoneme and regulates microtubule sliding in motile axonemes (PubMed:23427265, PubMed:25411337).</text>
</comment>
<comment type="subunit">
    <text evidence="2 3">Component of the nexin-dynein regulatory complex (N-DRC) (PubMed:23427265, PubMed:25411337).</text>
</comment>
<comment type="subcellular location">
    <subcellularLocation>
        <location evidence="2 3">Cytoplasm</location>
        <location evidence="2 3">Cytoskeleton</location>
        <location evidence="2 3">Flagellum axoneme</location>
    </subcellularLocation>
</comment>
<comment type="similarity">
    <text evidence="6">Belongs to the DRC6 family.</text>
</comment>